<gene>
    <name type="ordered locus">MRA_2364</name>
</gene>
<comment type="similarity">
    <text evidence="1">Belongs to the dGTPase family. Type 2 subfamily.</text>
</comment>
<protein>
    <recommendedName>
        <fullName evidence="1">Deoxyguanosinetriphosphate triphosphohydrolase-like protein</fullName>
    </recommendedName>
</protein>
<reference key="1">
    <citation type="journal article" date="2008" name="PLoS ONE">
        <title>Genetic basis of virulence attenuation revealed by comparative genomic analysis of Mycobacterium tuberculosis strain H37Ra versus H37Rv.</title>
        <authorList>
            <person name="Zheng H."/>
            <person name="Lu L."/>
            <person name="Wang B."/>
            <person name="Pu S."/>
            <person name="Zhang X."/>
            <person name="Zhu G."/>
            <person name="Shi W."/>
            <person name="Zhang L."/>
            <person name="Wang H."/>
            <person name="Wang S."/>
            <person name="Zhao G."/>
            <person name="Zhang Y."/>
        </authorList>
    </citation>
    <scope>NUCLEOTIDE SEQUENCE [LARGE SCALE GENOMIC DNA]</scope>
    <source>
        <strain>ATCC 25177 / H37Ra</strain>
    </source>
</reference>
<accession>A5U533</accession>
<name>DGTL1_MYCTA</name>
<proteinExistence type="inferred from homology"/>
<evidence type="ECO:0000255" key="1">
    <source>
        <dbReference type="HAMAP-Rule" id="MF_01212"/>
    </source>
</evidence>
<evidence type="ECO:0000255" key="2">
    <source>
        <dbReference type="PROSITE-ProRule" id="PRU01175"/>
    </source>
</evidence>
<evidence type="ECO:0000256" key="3">
    <source>
        <dbReference type="SAM" id="MobiDB-lite"/>
    </source>
</evidence>
<dbReference type="EMBL" id="CP000611">
    <property type="protein sequence ID" value="ABQ74133.1"/>
    <property type="molecule type" value="Genomic_DNA"/>
</dbReference>
<dbReference type="RefSeq" id="WP_003899281.1">
    <property type="nucleotide sequence ID" value="NZ_CP016972.1"/>
</dbReference>
<dbReference type="SMR" id="A5U533"/>
<dbReference type="KEGG" id="mra:MRA_2364"/>
<dbReference type="eggNOG" id="COG0232">
    <property type="taxonomic scope" value="Bacteria"/>
</dbReference>
<dbReference type="HOGENOM" id="CLU_028163_0_1_11"/>
<dbReference type="Proteomes" id="UP000001988">
    <property type="component" value="Chromosome"/>
</dbReference>
<dbReference type="GO" id="GO:0008832">
    <property type="term" value="F:dGTPase activity"/>
    <property type="evidence" value="ECO:0007669"/>
    <property type="project" value="TreeGrafter"/>
</dbReference>
<dbReference type="GO" id="GO:0006203">
    <property type="term" value="P:dGTP catabolic process"/>
    <property type="evidence" value="ECO:0007669"/>
    <property type="project" value="TreeGrafter"/>
</dbReference>
<dbReference type="CDD" id="cd00077">
    <property type="entry name" value="HDc"/>
    <property type="match status" value="1"/>
</dbReference>
<dbReference type="FunFam" id="1.10.3210.10:FF:000029">
    <property type="entry name" value="Deoxyguanosinetriphosphate triphosphohydrolase-like protein"/>
    <property type="match status" value="1"/>
</dbReference>
<dbReference type="Gene3D" id="1.10.3210.10">
    <property type="entry name" value="Hypothetical protein af1432"/>
    <property type="match status" value="1"/>
</dbReference>
<dbReference type="HAMAP" id="MF_01212">
    <property type="entry name" value="dGTPase_type2"/>
    <property type="match status" value="1"/>
</dbReference>
<dbReference type="InterPro" id="IPR006261">
    <property type="entry name" value="dGTPase"/>
</dbReference>
<dbReference type="InterPro" id="IPR050135">
    <property type="entry name" value="dGTPase-like"/>
</dbReference>
<dbReference type="InterPro" id="IPR023023">
    <property type="entry name" value="dNTPase_2"/>
</dbReference>
<dbReference type="InterPro" id="IPR003607">
    <property type="entry name" value="HD/PDEase_dom"/>
</dbReference>
<dbReference type="InterPro" id="IPR006674">
    <property type="entry name" value="HD_domain"/>
</dbReference>
<dbReference type="InterPro" id="IPR026875">
    <property type="entry name" value="PHydrolase_assoc_dom"/>
</dbReference>
<dbReference type="NCBIfam" id="TIGR01353">
    <property type="entry name" value="dGTP_triPase"/>
    <property type="match status" value="1"/>
</dbReference>
<dbReference type="NCBIfam" id="NF002829">
    <property type="entry name" value="PRK03007.1"/>
    <property type="match status" value="1"/>
</dbReference>
<dbReference type="PANTHER" id="PTHR11373:SF32">
    <property type="entry name" value="DEOXYGUANOSINETRIPHOSPHATE TRIPHOSPHOHYDROLASE"/>
    <property type="match status" value="1"/>
</dbReference>
<dbReference type="PANTHER" id="PTHR11373">
    <property type="entry name" value="DEOXYNUCLEOSIDE TRIPHOSPHATE TRIPHOSPHOHYDROLASE"/>
    <property type="match status" value="1"/>
</dbReference>
<dbReference type="Pfam" id="PF01966">
    <property type="entry name" value="HD"/>
    <property type="match status" value="1"/>
</dbReference>
<dbReference type="Pfam" id="PF13286">
    <property type="entry name" value="HD_assoc"/>
    <property type="match status" value="1"/>
</dbReference>
<dbReference type="SMART" id="SM00471">
    <property type="entry name" value="HDc"/>
    <property type="match status" value="1"/>
</dbReference>
<dbReference type="SUPFAM" id="SSF109604">
    <property type="entry name" value="HD-domain/PDEase-like"/>
    <property type="match status" value="1"/>
</dbReference>
<dbReference type="PROSITE" id="PS51831">
    <property type="entry name" value="HD"/>
    <property type="match status" value="1"/>
</dbReference>
<sequence length="431" mass="46912">MSASEHDPYDDFDRQRRVAEAPKTAGLPGTEGQYRSDFARDRARVLHSAALRRLADKTQVVGPREGDTPRTRLTHSLEVAQIGRGMAIGLGCDLDLVELAGLAHDIGHPPYGHNGERALDEVAASHGGFEGNAQNFRILTSLEPKVVDAQGLSAGLNLTRASLDAVTKYPWMRGDGLGSQRRKFGFYDDDRESAVWVRQGAPPERACLEAQVMDWADDVAYSVHDVEDGVVSERIDLRVLAAEEDAAALARLGEREFSRVSADELMAAARRLSRLPVVAAVGKYDATLSASVALKRLTSELVGRFASAAIATTRAAAGPGPLVRFRADLQVPDLVRAEVAVLKILALQFIMSDPRHLETQARQRERIHRVAHRLYSGAPQTLDPVYAAAFNTAADDAARLRVVVDQIASYTEGRLERIDADQLGVSRNALD</sequence>
<keyword id="KW-0378">Hydrolase</keyword>
<keyword id="KW-1185">Reference proteome</keyword>
<organism>
    <name type="scientific">Mycobacterium tuberculosis (strain ATCC 25177 / H37Ra)</name>
    <dbReference type="NCBI Taxonomy" id="419947"/>
    <lineage>
        <taxon>Bacteria</taxon>
        <taxon>Bacillati</taxon>
        <taxon>Actinomycetota</taxon>
        <taxon>Actinomycetes</taxon>
        <taxon>Mycobacteriales</taxon>
        <taxon>Mycobacteriaceae</taxon>
        <taxon>Mycobacterium</taxon>
        <taxon>Mycobacterium tuberculosis complex</taxon>
    </lineage>
</organism>
<feature type="chain" id="PRO_1000066426" description="Deoxyguanosinetriphosphate triphosphohydrolase-like protein">
    <location>
        <begin position="1"/>
        <end position="431"/>
    </location>
</feature>
<feature type="domain" description="HD" evidence="2">
    <location>
        <begin position="72"/>
        <end position="222"/>
    </location>
</feature>
<feature type="region of interest" description="Disordered" evidence="3">
    <location>
        <begin position="1"/>
        <end position="36"/>
    </location>
</feature>
<feature type="compositionally biased region" description="Basic and acidic residues" evidence="3">
    <location>
        <begin position="1"/>
        <end position="20"/>
    </location>
</feature>